<gene>
    <name type="primary">isdI</name>
    <name type="ordered locus">SAS0140</name>
</gene>
<comment type="function">
    <text evidence="1">Allows bacterial pathogens to use the host heme as an iron source. Catalyzes the oxidative degradation of the heme macrocyclic porphyrin ring to the oxo-bilirubin chromophore staphylobilin (a mixture of the linear tetrapyrroles 5-oxo-delta-bilirubin and 15-oxo-beta-bilirubin) in the presence of a suitable electron donor such as ascorbate or NADPH--cytochrome P450 reductase, with subsequent release of free iron.</text>
</comment>
<comment type="catalytic activity">
    <reaction evidence="1">
        <text>heme b + 5 AH2 + 4 O2 + 2 H(+) = delta-staphylobilin + Fe(2+) + formaldehyde + 5 A + 4 H2O</text>
        <dbReference type="Rhea" id="RHEA:37039"/>
        <dbReference type="ChEBI" id="CHEBI:13193"/>
        <dbReference type="ChEBI" id="CHEBI:15377"/>
        <dbReference type="ChEBI" id="CHEBI:15378"/>
        <dbReference type="ChEBI" id="CHEBI:15379"/>
        <dbReference type="ChEBI" id="CHEBI:16842"/>
        <dbReference type="ChEBI" id="CHEBI:17499"/>
        <dbReference type="ChEBI" id="CHEBI:29033"/>
        <dbReference type="ChEBI" id="CHEBI:60344"/>
        <dbReference type="ChEBI" id="CHEBI:74361"/>
        <dbReference type="EC" id="1.14.99.48"/>
    </reaction>
</comment>
<comment type="catalytic activity">
    <reaction evidence="1">
        <text>heme b + 5 AH2 + 4 O2 + 2 H(+) = beta-staphylobilin + Fe(2+) + formaldehyde + 5 A + 4 H2O</text>
        <dbReference type="Rhea" id="RHEA:37363"/>
        <dbReference type="ChEBI" id="CHEBI:13193"/>
        <dbReference type="ChEBI" id="CHEBI:15377"/>
        <dbReference type="ChEBI" id="CHEBI:15378"/>
        <dbReference type="ChEBI" id="CHEBI:15379"/>
        <dbReference type="ChEBI" id="CHEBI:16842"/>
        <dbReference type="ChEBI" id="CHEBI:17499"/>
        <dbReference type="ChEBI" id="CHEBI:29033"/>
        <dbReference type="ChEBI" id="CHEBI:60344"/>
        <dbReference type="ChEBI" id="CHEBI:74362"/>
        <dbReference type="EC" id="1.14.99.48"/>
    </reaction>
</comment>
<comment type="subunit">
    <text evidence="1">Homodimer.</text>
</comment>
<comment type="subcellular location">
    <subcellularLocation>
        <location evidence="1">Cytoplasm</location>
    </subcellularLocation>
</comment>
<comment type="similarity">
    <text evidence="1">Belongs to the antibiotic biosynthesis monooxygenase family. Heme-degrading monooxygenase IsdG subfamily.</text>
</comment>
<feature type="chain" id="PRO_0000270086" description="Heme oxygenase (staphylobilin-producing) 2">
    <location>
        <begin position="1"/>
        <end position="108"/>
    </location>
</feature>
<feature type="domain" description="ABM" evidence="1">
    <location>
        <begin position="2"/>
        <end position="93"/>
    </location>
</feature>
<feature type="binding site" evidence="1">
    <location>
        <position position="6"/>
    </location>
    <ligand>
        <name>Fe cation</name>
        <dbReference type="ChEBI" id="CHEBI:24875"/>
    </ligand>
</feature>
<feature type="binding site" evidence="1">
    <location>
        <begin position="21"/>
        <end position="28"/>
    </location>
    <ligand>
        <name>heme</name>
        <dbReference type="ChEBI" id="CHEBI:30413"/>
    </ligand>
</feature>
<feature type="binding site" description="axial binding residue" evidence="1">
    <location>
        <position position="76"/>
    </location>
    <ligand>
        <name>heme</name>
        <dbReference type="ChEBI" id="CHEBI:30413"/>
    </ligand>
    <ligandPart>
        <name>Fe</name>
        <dbReference type="ChEBI" id="CHEBI:18248"/>
    </ligandPart>
</feature>
<feature type="site" description="Transition state stabilizer" evidence="1">
    <location>
        <position position="66"/>
    </location>
</feature>
<protein>
    <recommendedName>
        <fullName evidence="1">Heme oxygenase (staphylobilin-producing) 2</fullName>
        <ecNumber evidence="1">1.14.99.48</ecNumber>
    </recommendedName>
    <alternativeName>
        <fullName evidence="1">Heme-degrading monooxygenase 2</fullName>
    </alternativeName>
    <alternativeName>
        <fullName evidence="1">Iron-regulated surface determinant 2</fullName>
    </alternativeName>
    <alternativeName>
        <fullName evidence="1">Iron-responsive surface determinant 2</fullName>
    </alternativeName>
</protein>
<sequence>MFMAENRLQLQKGSAEETIERFYNRQGIETIEGFQQMFVTKTLNTEDTDEVKILTIWESEDSFNNWLNSDVFKEAHKNVRLKSDDDGQQSPILSNKVFKYDIGYHYQK</sequence>
<name>HDOX2_STAAS</name>
<organism>
    <name type="scientific">Staphylococcus aureus (strain MSSA476)</name>
    <dbReference type="NCBI Taxonomy" id="282459"/>
    <lineage>
        <taxon>Bacteria</taxon>
        <taxon>Bacillati</taxon>
        <taxon>Bacillota</taxon>
        <taxon>Bacilli</taxon>
        <taxon>Bacillales</taxon>
        <taxon>Staphylococcaceae</taxon>
        <taxon>Staphylococcus</taxon>
    </lineage>
</organism>
<reference key="1">
    <citation type="journal article" date="2004" name="Proc. Natl. Acad. Sci. U.S.A.">
        <title>Complete genomes of two clinical Staphylococcus aureus strains: evidence for the rapid evolution of virulence and drug resistance.</title>
        <authorList>
            <person name="Holden M.T.G."/>
            <person name="Feil E.J."/>
            <person name="Lindsay J.A."/>
            <person name="Peacock S.J."/>
            <person name="Day N.P.J."/>
            <person name="Enright M.C."/>
            <person name="Foster T.J."/>
            <person name="Moore C.E."/>
            <person name="Hurst L."/>
            <person name="Atkin R."/>
            <person name="Barron A."/>
            <person name="Bason N."/>
            <person name="Bentley S.D."/>
            <person name="Chillingworth C."/>
            <person name="Chillingworth T."/>
            <person name="Churcher C."/>
            <person name="Clark L."/>
            <person name="Corton C."/>
            <person name="Cronin A."/>
            <person name="Doggett J."/>
            <person name="Dowd L."/>
            <person name="Feltwell T."/>
            <person name="Hance Z."/>
            <person name="Harris B."/>
            <person name="Hauser H."/>
            <person name="Holroyd S."/>
            <person name="Jagels K."/>
            <person name="James K.D."/>
            <person name="Lennard N."/>
            <person name="Line A."/>
            <person name="Mayes R."/>
            <person name="Moule S."/>
            <person name="Mungall K."/>
            <person name="Ormond D."/>
            <person name="Quail M.A."/>
            <person name="Rabbinowitsch E."/>
            <person name="Rutherford K.M."/>
            <person name="Sanders M."/>
            <person name="Sharp S."/>
            <person name="Simmonds M."/>
            <person name="Stevens K."/>
            <person name="Whitehead S."/>
            <person name="Barrell B.G."/>
            <person name="Spratt B.G."/>
            <person name="Parkhill J."/>
        </authorList>
    </citation>
    <scope>NUCLEOTIDE SEQUENCE [LARGE SCALE GENOMIC DNA]</scope>
    <source>
        <strain>MSSA476</strain>
    </source>
</reference>
<evidence type="ECO:0000255" key="1">
    <source>
        <dbReference type="HAMAP-Rule" id="MF_01272"/>
    </source>
</evidence>
<accession>Q6GCW1</accession>
<proteinExistence type="inferred from homology"/>
<keyword id="KW-0963">Cytoplasm</keyword>
<keyword id="KW-0349">Heme</keyword>
<keyword id="KW-0408">Iron</keyword>
<keyword id="KW-0479">Metal-binding</keyword>
<keyword id="KW-0503">Monooxygenase</keyword>
<keyword id="KW-0560">Oxidoreductase</keyword>
<dbReference type="EC" id="1.14.99.48" evidence="1"/>
<dbReference type="EMBL" id="BX571857">
    <property type="protein sequence ID" value="CAG41908.1"/>
    <property type="molecule type" value="Genomic_DNA"/>
</dbReference>
<dbReference type="RefSeq" id="WP_000480603.1">
    <property type="nucleotide sequence ID" value="NC_002953.3"/>
</dbReference>
<dbReference type="SMR" id="Q6GCW1"/>
<dbReference type="KEGG" id="sas:SAS0140"/>
<dbReference type="HOGENOM" id="CLU_141544_2_1_9"/>
<dbReference type="GO" id="GO:0005737">
    <property type="term" value="C:cytoplasm"/>
    <property type="evidence" value="ECO:0007669"/>
    <property type="project" value="UniProtKB-SubCell"/>
</dbReference>
<dbReference type="GO" id="GO:0020037">
    <property type="term" value="F:heme binding"/>
    <property type="evidence" value="ECO:0007669"/>
    <property type="project" value="UniProtKB-UniRule"/>
</dbReference>
<dbReference type="GO" id="GO:0004392">
    <property type="term" value="F:heme oxygenase (decyclizing) activity"/>
    <property type="evidence" value="ECO:0007669"/>
    <property type="project" value="UniProtKB-UniRule"/>
</dbReference>
<dbReference type="GO" id="GO:0005506">
    <property type="term" value="F:iron ion binding"/>
    <property type="evidence" value="ECO:0007669"/>
    <property type="project" value="UniProtKB-UniRule"/>
</dbReference>
<dbReference type="GO" id="GO:0042167">
    <property type="term" value="P:heme catabolic process"/>
    <property type="evidence" value="ECO:0007669"/>
    <property type="project" value="UniProtKB-UniRule"/>
</dbReference>
<dbReference type="GO" id="GO:0033212">
    <property type="term" value="P:iron import into cell"/>
    <property type="evidence" value="ECO:0007669"/>
    <property type="project" value="InterPro"/>
</dbReference>
<dbReference type="Gene3D" id="3.30.70.100">
    <property type="match status" value="1"/>
</dbReference>
<dbReference type="HAMAP" id="MF_01272">
    <property type="entry name" value="Heme_degrading_monooxygenase"/>
    <property type="match status" value="1"/>
</dbReference>
<dbReference type="InterPro" id="IPR007138">
    <property type="entry name" value="ABM_dom"/>
</dbReference>
<dbReference type="InterPro" id="IPR011008">
    <property type="entry name" value="Dimeric_a/b-barrel"/>
</dbReference>
<dbReference type="InterPro" id="IPR050404">
    <property type="entry name" value="Heme-degrading_MO"/>
</dbReference>
<dbReference type="InterPro" id="IPR023953">
    <property type="entry name" value="IsdG"/>
</dbReference>
<dbReference type="NCBIfam" id="NF009838">
    <property type="entry name" value="PRK13313.1"/>
    <property type="match status" value="1"/>
</dbReference>
<dbReference type="PANTHER" id="PTHR34474:SF4">
    <property type="entry name" value="HEME OXYGENASE (STAPHYLOBILIN-PRODUCING) 1"/>
    <property type="match status" value="1"/>
</dbReference>
<dbReference type="PANTHER" id="PTHR34474">
    <property type="entry name" value="SIGNAL TRANSDUCTION PROTEIN TRAP"/>
    <property type="match status" value="1"/>
</dbReference>
<dbReference type="Pfam" id="PF03992">
    <property type="entry name" value="ABM"/>
    <property type="match status" value="1"/>
</dbReference>
<dbReference type="SUPFAM" id="SSF54909">
    <property type="entry name" value="Dimeric alpha+beta barrel"/>
    <property type="match status" value="1"/>
</dbReference>
<dbReference type="PROSITE" id="PS51725">
    <property type="entry name" value="ABM"/>
    <property type="match status" value="1"/>
</dbReference>